<feature type="chain" id="PRO_0000249189" description="Tripartite motif-containing protein 60">
    <location>
        <begin position="1"/>
        <end position="471"/>
    </location>
</feature>
<feature type="domain" description="B30.2/SPRY" evidence="4">
    <location>
        <begin position="277"/>
        <end position="470"/>
    </location>
</feature>
<feature type="zinc finger region" description="RING-type" evidence="3">
    <location>
        <begin position="16"/>
        <end position="57"/>
    </location>
</feature>
<feature type="zinc finger region" description="B box-type" evidence="2">
    <location>
        <begin position="92"/>
        <end position="133"/>
    </location>
</feature>
<feature type="coiled-coil region" evidence="1">
    <location>
        <begin position="171"/>
        <end position="223"/>
    </location>
</feature>
<feature type="binding site" evidence="2">
    <location>
        <position position="97"/>
    </location>
    <ligand>
        <name>Zn(2+)</name>
        <dbReference type="ChEBI" id="CHEBI:29105"/>
    </ligand>
</feature>
<feature type="binding site" evidence="2">
    <location>
        <position position="100"/>
    </location>
    <ligand>
        <name>Zn(2+)</name>
        <dbReference type="ChEBI" id="CHEBI:29105"/>
    </ligand>
</feature>
<feature type="binding site" evidence="2">
    <location>
        <position position="119"/>
    </location>
    <ligand>
        <name>Zn(2+)</name>
        <dbReference type="ChEBI" id="CHEBI:29105"/>
    </ligand>
</feature>
<feature type="binding site" evidence="2">
    <location>
        <position position="125"/>
    </location>
    <ligand>
        <name>Zn(2+)</name>
        <dbReference type="ChEBI" id="CHEBI:29105"/>
    </ligand>
</feature>
<feature type="sequence conflict" description="In Ref. 2; AAI00986." evidence="6" ref="2">
    <original>T</original>
    <variation>I</variation>
    <location>
        <position position="445"/>
    </location>
</feature>
<keyword id="KW-0175">Coiled coil</keyword>
<keyword id="KW-0479">Metal-binding</keyword>
<keyword id="KW-1185">Reference proteome</keyword>
<keyword id="KW-0862">Zinc</keyword>
<keyword id="KW-0863">Zinc-finger</keyword>
<comment type="function">
    <text evidence="5">E3 SUMO-protein ligase that mediates SUMOylation of TAB2 leading to inhibition of NF-kappa-B and MAPK pathways by suppressing the TRAF6/TAB2/TAK1 complex.</text>
</comment>
<comment type="interaction">
    <interactant intactId="EBI-13576620">
        <id>Q495X7</id>
    </interactant>
    <interactant intactId="EBI-739832">
        <id>Q8TBB1</id>
        <label>LNX1</label>
    </interactant>
    <organismsDiffer>false</organismsDiffer>
    <experiments>3</experiments>
</comment>
<comment type="similarity">
    <text evidence="6">Belongs to the TRIM/RBCC family.</text>
</comment>
<sequence length="471" mass="55114">MEFVTALVNLQEESSCPICLEYLKDPVTINCGHNFCRSCLSVSWKDLDDTFPCPVCRFCFPYKSFRRNPQLRNLTEIAKQLQIRRSKRKRQKENAMCEKHNQFLTLFCVKDLEILCTQCSFSTKHQKHYICPIKKAASYHREILEGSLEPLRNNIERVEKVIILQGSKSVELKKKVEYKREEINSEFEQIRLFLQNEQEMILRQIQDEEMNILAKLNENLVELSDYVSTLKHLLREVEGKSVQSNLELLTQAKSMHHKYQNLKCPELFSFRLTKYGFSLPPQYSGLDRIIKPFQVDVILDLNTAHPQLLVSEDRKAVRYERKKRNICYDPRRFYVCPAVLGSQRFSSGRHYWEVEVGNKPKWILGVCQDCLLRNWQDQPSVLGGFWAIGRYMKSGYVASGPKTTQLLPVVKPSKIGIFLDYELGDLSFYNMNDRSILYTFNDCFTEAVWPYFYTGTDSEPLKICSVSDSER</sequence>
<proteinExistence type="evidence at protein level"/>
<protein>
    <recommendedName>
        <fullName>Tripartite motif-containing protein 60</fullName>
    </recommendedName>
    <alternativeName>
        <fullName>RING finger protein 129</fullName>
    </alternativeName>
    <alternativeName>
        <fullName>RING finger protein 33</fullName>
    </alternativeName>
</protein>
<reference key="1">
    <citation type="journal article" date="2004" name="Nat. Genet.">
        <title>Complete sequencing and characterization of 21,243 full-length human cDNAs.</title>
        <authorList>
            <person name="Ota T."/>
            <person name="Suzuki Y."/>
            <person name="Nishikawa T."/>
            <person name="Otsuki T."/>
            <person name="Sugiyama T."/>
            <person name="Irie R."/>
            <person name="Wakamatsu A."/>
            <person name="Hayashi K."/>
            <person name="Sato H."/>
            <person name="Nagai K."/>
            <person name="Kimura K."/>
            <person name="Makita H."/>
            <person name="Sekine M."/>
            <person name="Obayashi M."/>
            <person name="Nishi T."/>
            <person name="Shibahara T."/>
            <person name="Tanaka T."/>
            <person name="Ishii S."/>
            <person name="Yamamoto J."/>
            <person name="Saito K."/>
            <person name="Kawai Y."/>
            <person name="Isono Y."/>
            <person name="Nakamura Y."/>
            <person name="Nagahari K."/>
            <person name="Murakami K."/>
            <person name="Yasuda T."/>
            <person name="Iwayanagi T."/>
            <person name="Wagatsuma M."/>
            <person name="Shiratori A."/>
            <person name="Sudo H."/>
            <person name="Hosoiri T."/>
            <person name="Kaku Y."/>
            <person name="Kodaira H."/>
            <person name="Kondo H."/>
            <person name="Sugawara M."/>
            <person name="Takahashi M."/>
            <person name="Kanda K."/>
            <person name="Yokoi T."/>
            <person name="Furuya T."/>
            <person name="Kikkawa E."/>
            <person name="Omura Y."/>
            <person name="Abe K."/>
            <person name="Kamihara K."/>
            <person name="Katsuta N."/>
            <person name="Sato K."/>
            <person name="Tanikawa M."/>
            <person name="Yamazaki M."/>
            <person name="Ninomiya K."/>
            <person name="Ishibashi T."/>
            <person name="Yamashita H."/>
            <person name="Murakawa K."/>
            <person name="Fujimori K."/>
            <person name="Tanai H."/>
            <person name="Kimata M."/>
            <person name="Watanabe M."/>
            <person name="Hiraoka S."/>
            <person name="Chiba Y."/>
            <person name="Ishida S."/>
            <person name="Ono Y."/>
            <person name="Takiguchi S."/>
            <person name="Watanabe S."/>
            <person name="Yosida M."/>
            <person name="Hotuta T."/>
            <person name="Kusano J."/>
            <person name="Kanehori K."/>
            <person name="Takahashi-Fujii A."/>
            <person name="Hara H."/>
            <person name="Tanase T.-O."/>
            <person name="Nomura Y."/>
            <person name="Togiya S."/>
            <person name="Komai F."/>
            <person name="Hara R."/>
            <person name="Takeuchi K."/>
            <person name="Arita M."/>
            <person name="Imose N."/>
            <person name="Musashino K."/>
            <person name="Yuuki H."/>
            <person name="Oshima A."/>
            <person name="Sasaki N."/>
            <person name="Aotsuka S."/>
            <person name="Yoshikawa Y."/>
            <person name="Matsunawa H."/>
            <person name="Ichihara T."/>
            <person name="Shiohata N."/>
            <person name="Sano S."/>
            <person name="Moriya S."/>
            <person name="Momiyama H."/>
            <person name="Satoh N."/>
            <person name="Takami S."/>
            <person name="Terashima Y."/>
            <person name="Suzuki O."/>
            <person name="Nakagawa S."/>
            <person name="Senoh A."/>
            <person name="Mizoguchi H."/>
            <person name="Goto Y."/>
            <person name="Shimizu F."/>
            <person name="Wakebe H."/>
            <person name="Hishigaki H."/>
            <person name="Watanabe T."/>
            <person name="Sugiyama A."/>
            <person name="Takemoto M."/>
            <person name="Kawakami B."/>
            <person name="Yamazaki M."/>
            <person name="Watanabe K."/>
            <person name="Kumagai A."/>
            <person name="Itakura S."/>
            <person name="Fukuzumi Y."/>
            <person name="Fujimori Y."/>
            <person name="Komiyama M."/>
            <person name="Tashiro H."/>
            <person name="Tanigami A."/>
            <person name="Fujiwara T."/>
            <person name="Ono T."/>
            <person name="Yamada K."/>
            <person name="Fujii Y."/>
            <person name="Ozaki K."/>
            <person name="Hirao M."/>
            <person name="Ohmori Y."/>
            <person name="Kawabata A."/>
            <person name="Hikiji T."/>
            <person name="Kobatake N."/>
            <person name="Inagaki H."/>
            <person name="Ikema Y."/>
            <person name="Okamoto S."/>
            <person name="Okitani R."/>
            <person name="Kawakami T."/>
            <person name="Noguchi S."/>
            <person name="Itoh T."/>
            <person name="Shigeta K."/>
            <person name="Senba T."/>
            <person name="Matsumura K."/>
            <person name="Nakajima Y."/>
            <person name="Mizuno T."/>
            <person name="Morinaga M."/>
            <person name="Sasaki M."/>
            <person name="Togashi T."/>
            <person name="Oyama M."/>
            <person name="Hata H."/>
            <person name="Watanabe M."/>
            <person name="Komatsu T."/>
            <person name="Mizushima-Sugano J."/>
            <person name="Satoh T."/>
            <person name="Shirai Y."/>
            <person name="Takahashi Y."/>
            <person name="Nakagawa K."/>
            <person name="Okumura K."/>
            <person name="Nagase T."/>
            <person name="Nomura N."/>
            <person name="Kikuchi H."/>
            <person name="Masuho Y."/>
            <person name="Yamashita R."/>
            <person name="Nakai K."/>
            <person name="Yada T."/>
            <person name="Nakamura Y."/>
            <person name="Ohara O."/>
            <person name="Isogai T."/>
            <person name="Sugano S."/>
        </authorList>
    </citation>
    <scope>NUCLEOTIDE SEQUENCE [LARGE SCALE MRNA]</scope>
    <source>
        <tissue>Testis</tissue>
    </source>
</reference>
<reference key="2">
    <citation type="journal article" date="2004" name="Genome Res.">
        <title>The status, quality, and expansion of the NIH full-length cDNA project: the Mammalian Gene Collection (MGC).</title>
        <authorList>
            <consortium name="The MGC Project Team"/>
        </authorList>
    </citation>
    <scope>NUCLEOTIDE SEQUENCE [LARGE SCALE MRNA]</scope>
</reference>
<reference key="3">
    <citation type="journal article" date="2021" name="Cell. Mol. Immunol.">
        <title>The SUMOylation of TAB2 mediated by TRIM60 inhibits MAPK/NF-kappaB activation and the innate immune response.</title>
        <authorList>
            <person name="Gu Z."/>
            <person name="Chen X."/>
            <person name="Yang W."/>
            <person name="Qi Y."/>
            <person name="Yu H."/>
            <person name="Wang X."/>
            <person name="Gong Y."/>
            <person name="Chen Q."/>
            <person name="Zhong B."/>
            <person name="Dai L."/>
            <person name="Qi S."/>
            <person name="Zhang Z."/>
            <person name="Zhang H."/>
            <person name="Hu H."/>
        </authorList>
    </citation>
    <scope>FUNCTION</scope>
</reference>
<organism>
    <name type="scientific">Homo sapiens</name>
    <name type="common">Human</name>
    <dbReference type="NCBI Taxonomy" id="9606"/>
    <lineage>
        <taxon>Eukaryota</taxon>
        <taxon>Metazoa</taxon>
        <taxon>Chordata</taxon>
        <taxon>Craniata</taxon>
        <taxon>Vertebrata</taxon>
        <taxon>Euteleostomi</taxon>
        <taxon>Mammalia</taxon>
        <taxon>Eutheria</taxon>
        <taxon>Euarchontoglires</taxon>
        <taxon>Primates</taxon>
        <taxon>Haplorrhini</taxon>
        <taxon>Catarrhini</taxon>
        <taxon>Hominidae</taxon>
        <taxon>Homo</taxon>
    </lineage>
</organism>
<gene>
    <name type="primary">TRIM60</name>
    <name type="synonym">RNF129</name>
    <name type="synonym">RNF33</name>
</gene>
<accession>Q495X7</accession>
<accession>Q8NA35</accession>
<dbReference type="EMBL" id="AK093201">
    <property type="protein sequence ID" value="BAC04093.1"/>
    <property type="molecule type" value="mRNA"/>
</dbReference>
<dbReference type="EMBL" id="BC100983">
    <property type="protein sequence ID" value="AAI00984.1"/>
    <property type="molecule type" value="mRNA"/>
</dbReference>
<dbReference type="EMBL" id="BC100984">
    <property type="protein sequence ID" value="AAI00985.1"/>
    <property type="molecule type" value="mRNA"/>
</dbReference>
<dbReference type="EMBL" id="BC100985">
    <property type="protein sequence ID" value="AAI00986.1"/>
    <property type="molecule type" value="mRNA"/>
</dbReference>
<dbReference type="EMBL" id="BC100986">
    <property type="protein sequence ID" value="AAI00987.1"/>
    <property type="molecule type" value="mRNA"/>
</dbReference>
<dbReference type="CCDS" id="CCDS3808.1"/>
<dbReference type="RefSeq" id="NP_001244954.1">
    <property type="nucleotide sequence ID" value="NM_001258025.2"/>
</dbReference>
<dbReference type="RefSeq" id="NP_689833.1">
    <property type="nucleotide sequence ID" value="NM_152620.3"/>
</dbReference>
<dbReference type="RefSeq" id="XP_011529985.1">
    <property type="nucleotide sequence ID" value="XM_011531683.3"/>
</dbReference>
<dbReference type="RefSeq" id="XP_054205075.1">
    <property type="nucleotide sequence ID" value="XM_054349100.1"/>
</dbReference>
<dbReference type="SMR" id="Q495X7"/>
<dbReference type="BioGRID" id="127931">
    <property type="interactions" value="5"/>
</dbReference>
<dbReference type="FunCoup" id="Q495X7">
    <property type="interactions" value="11"/>
</dbReference>
<dbReference type="IntAct" id="Q495X7">
    <property type="interactions" value="1"/>
</dbReference>
<dbReference type="STRING" id="9606.ENSP00000497401"/>
<dbReference type="iPTMnet" id="Q495X7"/>
<dbReference type="PhosphoSitePlus" id="Q495X7"/>
<dbReference type="SwissPalm" id="Q495X7"/>
<dbReference type="BioMuta" id="TRIM60"/>
<dbReference type="DMDM" id="114154820"/>
<dbReference type="jPOST" id="Q495X7"/>
<dbReference type="MassIVE" id="Q495X7"/>
<dbReference type="PaxDb" id="9606-ENSP00000421142"/>
<dbReference type="PeptideAtlas" id="Q495X7"/>
<dbReference type="Antibodypedia" id="28289">
    <property type="antibodies" value="47 antibodies from 15 providers"/>
</dbReference>
<dbReference type="DNASU" id="166655"/>
<dbReference type="Ensembl" id="ENST00000341062.6">
    <property type="protein sequence ID" value="ENSP00000343765.5"/>
    <property type="gene ID" value="ENSG00000176979.14"/>
</dbReference>
<dbReference type="Ensembl" id="ENST00000508504.1">
    <property type="protein sequence ID" value="ENSP00000426496.1"/>
    <property type="gene ID" value="ENSG00000176979.14"/>
</dbReference>
<dbReference type="Ensembl" id="ENST00000512596.6">
    <property type="protein sequence ID" value="ENSP00000421142.1"/>
    <property type="gene ID" value="ENSG00000176979.14"/>
</dbReference>
<dbReference type="Ensembl" id="ENST00000647760.1">
    <property type="protein sequence ID" value="ENSP00000497401.1"/>
    <property type="gene ID" value="ENSG00000176979.14"/>
</dbReference>
<dbReference type="GeneID" id="166655"/>
<dbReference type="KEGG" id="hsa:166655"/>
<dbReference type="MANE-Select" id="ENST00000512596.6">
    <property type="protein sequence ID" value="ENSP00000421142.1"/>
    <property type="RefSeq nucleotide sequence ID" value="NM_152620.3"/>
    <property type="RefSeq protein sequence ID" value="NP_689833.1"/>
</dbReference>
<dbReference type="UCSC" id="uc003iqy.2">
    <property type="organism name" value="human"/>
</dbReference>
<dbReference type="AGR" id="HGNC:21162"/>
<dbReference type="CTD" id="166655"/>
<dbReference type="DisGeNET" id="166655"/>
<dbReference type="GeneCards" id="TRIM60"/>
<dbReference type="HGNC" id="HGNC:21162">
    <property type="gene designation" value="TRIM60"/>
</dbReference>
<dbReference type="HPA" id="ENSG00000176979">
    <property type="expression patterns" value="Group enriched (placenta, testis)"/>
</dbReference>
<dbReference type="MIM" id="619416">
    <property type="type" value="gene"/>
</dbReference>
<dbReference type="neXtProt" id="NX_Q495X7"/>
<dbReference type="OpenTargets" id="ENSG00000176979"/>
<dbReference type="PharmGKB" id="PA134909634"/>
<dbReference type="VEuPathDB" id="HostDB:ENSG00000176979"/>
<dbReference type="eggNOG" id="KOG2177">
    <property type="taxonomic scope" value="Eukaryota"/>
</dbReference>
<dbReference type="GeneTree" id="ENSGT00940000155329"/>
<dbReference type="HOGENOM" id="CLU_013137_0_3_1"/>
<dbReference type="InParanoid" id="Q495X7"/>
<dbReference type="OMA" id="GNKPKWT"/>
<dbReference type="OrthoDB" id="128536at2759"/>
<dbReference type="PAN-GO" id="Q495X7">
    <property type="GO annotations" value="5 GO annotations based on evolutionary models"/>
</dbReference>
<dbReference type="PhylomeDB" id="Q495X7"/>
<dbReference type="TreeFam" id="TF338674"/>
<dbReference type="PathwayCommons" id="Q495X7"/>
<dbReference type="SignaLink" id="Q495X7"/>
<dbReference type="SIGNOR" id="Q495X7"/>
<dbReference type="BioGRID-ORCS" id="166655">
    <property type="hits" value="11 hits in 1180 CRISPR screens"/>
</dbReference>
<dbReference type="ChiTaRS" id="TRIM60">
    <property type="organism name" value="human"/>
</dbReference>
<dbReference type="GenomeRNAi" id="166655"/>
<dbReference type="Pharos" id="Q495X7">
    <property type="development level" value="Tdark"/>
</dbReference>
<dbReference type="PRO" id="PR:Q495X7"/>
<dbReference type="Proteomes" id="UP000005640">
    <property type="component" value="Chromosome 4"/>
</dbReference>
<dbReference type="RNAct" id="Q495X7">
    <property type="molecule type" value="protein"/>
</dbReference>
<dbReference type="Bgee" id="ENSG00000176979">
    <property type="expression patterns" value="Expressed in primordial germ cell in gonad and 6 other cell types or tissues"/>
</dbReference>
<dbReference type="ExpressionAtlas" id="Q495X7">
    <property type="expression patterns" value="baseline and differential"/>
</dbReference>
<dbReference type="GO" id="GO:0005737">
    <property type="term" value="C:cytoplasm"/>
    <property type="evidence" value="ECO:0000318"/>
    <property type="project" value="GO_Central"/>
</dbReference>
<dbReference type="GO" id="GO:0140082">
    <property type="term" value="F:SUMO-ubiquitin ligase activity"/>
    <property type="evidence" value="ECO:0000314"/>
    <property type="project" value="UniProt"/>
</dbReference>
<dbReference type="GO" id="GO:0061630">
    <property type="term" value="F:ubiquitin protein ligase activity"/>
    <property type="evidence" value="ECO:0000318"/>
    <property type="project" value="GO_Central"/>
</dbReference>
<dbReference type="GO" id="GO:0008270">
    <property type="term" value="F:zinc ion binding"/>
    <property type="evidence" value="ECO:0007669"/>
    <property type="project" value="UniProtKB-KW"/>
</dbReference>
<dbReference type="GO" id="GO:0045087">
    <property type="term" value="P:innate immune response"/>
    <property type="evidence" value="ECO:0000318"/>
    <property type="project" value="GO_Central"/>
</dbReference>
<dbReference type="GO" id="GO:1901223">
    <property type="term" value="P:negative regulation of non-canonical NF-kappaB signal transduction"/>
    <property type="evidence" value="ECO:0000314"/>
    <property type="project" value="UniProt"/>
</dbReference>
<dbReference type="GO" id="GO:0010468">
    <property type="term" value="P:regulation of gene expression"/>
    <property type="evidence" value="ECO:0000318"/>
    <property type="project" value="GO_Central"/>
</dbReference>
<dbReference type="CDD" id="cd19791">
    <property type="entry name" value="Bbox2_TRIM60-like"/>
    <property type="match status" value="1"/>
</dbReference>
<dbReference type="CDD" id="cd16607">
    <property type="entry name" value="RING-HC_TRIM60-like_C-IV"/>
    <property type="match status" value="1"/>
</dbReference>
<dbReference type="CDD" id="cd15828">
    <property type="entry name" value="SPRY_PRY_TRIM60"/>
    <property type="match status" value="1"/>
</dbReference>
<dbReference type="FunFam" id="2.60.120.920:FF:000004">
    <property type="entry name" value="Butyrophilin subfamily 1 member A1"/>
    <property type="match status" value="1"/>
</dbReference>
<dbReference type="Gene3D" id="2.60.120.920">
    <property type="match status" value="1"/>
</dbReference>
<dbReference type="Gene3D" id="3.30.160.60">
    <property type="entry name" value="Classic Zinc Finger"/>
    <property type="match status" value="1"/>
</dbReference>
<dbReference type="Gene3D" id="3.30.40.10">
    <property type="entry name" value="Zinc/RING finger domain, C3HC4 (zinc finger)"/>
    <property type="match status" value="1"/>
</dbReference>
<dbReference type="InterPro" id="IPR001870">
    <property type="entry name" value="B30.2/SPRY"/>
</dbReference>
<dbReference type="InterPro" id="IPR043136">
    <property type="entry name" value="B30.2/SPRY_sf"/>
</dbReference>
<dbReference type="InterPro" id="IPR003879">
    <property type="entry name" value="Butyrophylin_SPRY"/>
</dbReference>
<dbReference type="InterPro" id="IPR013320">
    <property type="entry name" value="ConA-like_dom_sf"/>
</dbReference>
<dbReference type="InterPro" id="IPR006574">
    <property type="entry name" value="PRY"/>
</dbReference>
<dbReference type="InterPro" id="IPR035786">
    <property type="entry name" value="SPRY/PRY_TRIM60"/>
</dbReference>
<dbReference type="InterPro" id="IPR003877">
    <property type="entry name" value="SPRY_dom"/>
</dbReference>
<dbReference type="InterPro" id="IPR050143">
    <property type="entry name" value="TRIM/RBCC"/>
</dbReference>
<dbReference type="InterPro" id="IPR000315">
    <property type="entry name" value="Znf_B-box"/>
</dbReference>
<dbReference type="InterPro" id="IPR001841">
    <property type="entry name" value="Znf_RING"/>
</dbReference>
<dbReference type="InterPro" id="IPR013083">
    <property type="entry name" value="Znf_RING/FYVE/PHD"/>
</dbReference>
<dbReference type="InterPro" id="IPR017907">
    <property type="entry name" value="Znf_RING_CS"/>
</dbReference>
<dbReference type="PANTHER" id="PTHR24103">
    <property type="entry name" value="E3 UBIQUITIN-PROTEIN LIGASE TRIM"/>
    <property type="match status" value="1"/>
</dbReference>
<dbReference type="Pfam" id="PF13765">
    <property type="entry name" value="PRY"/>
    <property type="match status" value="1"/>
</dbReference>
<dbReference type="Pfam" id="PF00622">
    <property type="entry name" value="SPRY"/>
    <property type="match status" value="1"/>
</dbReference>
<dbReference type="Pfam" id="PF00643">
    <property type="entry name" value="zf-B_box"/>
    <property type="match status" value="1"/>
</dbReference>
<dbReference type="Pfam" id="PF15227">
    <property type="entry name" value="zf-C3HC4_4"/>
    <property type="match status" value="1"/>
</dbReference>
<dbReference type="PRINTS" id="PR01407">
    <property type="entry name" value="BUTYPHLNCDUF"/>
</dbReference>
<dbReference type="SMART" id="SM00336">
    <property type="entry name" value="BBOX"/>
    <property type="match status" value="1"/>
</dbReference>
<dbReference type="SMART" id="SM00589">
    <property type="entry name" value="PRY"/>
    <property type="match status" value="1"/>
</dbReference>
<dbReference type="SMART" id="SM00184">
    <property type="entry name" value="RING"/>
    <property type="match status" value="1"/>
</dbReference>
<dbReference type="SMART" id="SM00449">
    <property type="entry name" value="SPRY"/>
    <property type="match status" value="1"/>
</dbReference>
<dbReference type="SUPFAM" id="SSF57845">
    <property type="entry name" value="B-box zinc-binding domain"/>
    <property type="match status" value="1"/>
</dbReference>
<dbReference type="SUPFAM" id="SSF49899">
    <property type="entry name" value="Concanavalin A-like lectins/glucanases"/>
    <property type="match status" value="1"/>
</dbReference>
<dbReference type="SUPFAM" id="SSF57850">
    <property type="entry name" value="RING/U-box"/>
    <property type="match status" value="1"/>
</dbReference>
<dbReference type="PROSITE" id="PS50188">
    <property type="entry name" value="B302_SPRY"/>
    <property type="match status" value="1"/>
</dbReference>
<dbReference type="PROSITE" id="PS50119">
    <property type="entry name" value="ZF_BBOX"/>
    <property type="match status" value="1"/>
</dbReference>
<dbReference type="PROSITE" id="PS00518">
    <property type="entry name" value="ZF_RING_1"/>
    <property type="match status" value="1"/>
</dbReference>
<dbReference type="PROSITE" id="PS50089">
    <property type="entry name" value="ZF_RING_2"/>
    <property type="match status" value="1"/>
</dbReference>
<name>TRI60_HUMAN</name>
<evidence type="ECO:0000255" key="1"/>
<evidence type="ECO:0000255" key="2">
    <source>
        <dbReference type="PROSITE-ProRule" id="PRU00024"/>
    </source>
</evidence>
<evidence type="ECO:0000255" key="3">
    <source>
        <dbReference type="PROSITE-ProRule" id="PRU00175"/>
    </source>
</evidence>
<evidence type="ECO:0000255" key="4">
    <source>
        <dbReference type="PROSITE-ProRule" id="PRU00548"/>
    </source>
</evidence>
<evidence type="ECO:0000269" key="5">
    <source>
    </source>
</evidence>
<evidence type="ECO:0000305" key="6"/>